<proteinExistence type="evidence at protein level"/>
<organismHost>
    <name type="scientific">Lepidoptera</name>
    <name type="common">butterflies and moths</name>
    <dbReference type="NCBI Taxonomy" id="7088"/>
</organismHost>
<dbReference type="EMBL" id="L22858">
    <property type="protein sequence ID" value="AAA66728.1"/>
    <property type="molecule type" value="Genomic_DNA"/>
</dbReference>
<dbReference type="EMBL" id="M57687">
    <property type="status" value="NOT_ANNOTATED_CDS"/>
    <property type="molecule type" value="Genomic_DNA"/>
</dbReference>
<dbReference type="PIR" id="C72862">
    <property type="entry name" value="C72862"/>
</dbReference>
<dbReference type="RefSeq" id="NP_054128.1">
    <property type="nucleotide sequence ID" value="NC_001623.1"/>
</dbReference>
<dbReference type="PDB" id="8I8B">
    <property type="method" value="EM"/>
    <property type="resolution" value="4.31 A"/>
    <property type="chains" value="J=1-320"/>
</dbReference>
<dbReference type="PDB" id="8VWI">
    <property type="method" value="EM"/>
    <property type="resolution" value="4.71 A"/>
    <property type="chains" value="P/k=1-320"/>
</dbReference>
<dbReference type="PDB" id="8VWJ">
    <property type="method" value="EM"/>
    <property type="resolution" value="4.78 A"/>
    <property type="chains" value="P/k=1-320"/>
</dbReference>
<dbReference type="PDBsum" id="8I8B"/>
<dbReference type="PDBsum" id="8VWI"/>
<dbReference type="PDBsum" id="8VWJ"/>
<dbReference type="EMDB" id="EMD-43588"/>
<dbReference type="EMDB" id="EMD-43589"/>
<dbReference type="SMR" id="P24745"/>
<dbReference type="GeneID" id="1403931"/>
<dbReference type="KEGG" id="vg:1403931"/>
<dbReference type="OrthoDB" id="4999at10239"/>
<dbReference type="Proteomes" id="UP000008292">
    <property type="component" value="Segment"/>
</dbReference>
<dbReference type="GO" id="GO:0030430">
    <property type="term" value="C:host cell cytoplasm"/>
    <property type="evidence" value="ECO:0007669"/>
    <property type="project" value="UniProtKB-SubCell"/>
</dbReference>
<dbReference type="GO" id="GO:0042025">
    <property type="term" value="C:host cell nucleus"/>
    <property type="evidence" value="ECO:0007669"/>
    <property type="project" value="UniProtKB-SubCell"/>
</dbReference>
<dbReference type="GO" id="GO:0044423">
    <property type="term" value="C:virion component"/>
    <property type="evidence" value="ECO:0007669"/>
    <property type="project" value="UniProtKB-KW"/>
</dbReference>
<dbReference type="CDD" id="cd01427">
    <property type="entry name" value="HAD_like"/>
    <property type="match status" value="1"/>
</dbReference>
<dbReference type="Gene3D" id="3.40.50.1000">
    <property type="entry name" value="HAD superfamily/HAD-like"/>
    <property type="match status" value="1"/>
</dbReference>
<dbReference type="InterPro" id="IPR007827">
    <property type="entry name" value="DUF705"/>
</dbReference>
<dbReference type="InterPro" id="IPR036412">
    <property type="entry name" value="HAD-like_sf"/>
</dbReference>
<dbReference type="InterPro" id="IPR023214">
    <property type="entry name" value="HAD_sf"/>
</dbReference>
<dbReference type="InterPro" id="IPR010033">
    <property type="entry name" value="HAD_SF_ppase_IIIC"/>
</dbReference>
<dbReference type="NCBIfam" id="TIGR01681">
    <property type="entry name" value="HAD-SF-IIIC"/>
    <property type="match status" value="1"/>
</dbReference>
<dbReference type="NCBIfam" id="TIGR01684">
    <property type="entry name" value="viral_ppase"/>
    <property type="match status" value="1"/>
</dbReference>
<dbReference type="Pfam" id="PF05152">
    <property type="entry name" value="DUF705"/>
    <property type="match status" value="1"/>
</dbReference>
<dbReference type="SUPFAM" id="SSF56784">
    <property type="entry name" value="HAD-like"/>
    <property type="match status" value="1"/>
</dbReference>
<feature type="chain" id="PRO_0000133031" description="Uncharacterized 38.0 kDa protein in P143-LEF5 intergenic region">
    <location>
        <begin position="1"/>
        <end position="320"/>
    </location>
</feature>
<organism>
    <name type="scientific">Autographa californica nuclear polyhedrosis virus</name>
    <name type="common">AcMNPV</name>
    <dbReference type="NCBI Taxonomy" id="46015"/>
    <lineage>
        <taxon>Viruses</taxon>
        <taxon>Viruses incertae sedis</taxon>
        <taxon>Naldaviricetes</taxon>
        <taxon>Lefavirales</taxon>
        <taxon>Baculoviridae</taxon>
        <taxon>Alphabaculovirus</taxon>
        <taxon>Alphabaculovirus aucalifornicae</taxon>
    </lineage>
</organism>
<comment type="function">
    <text evidence="1 2">Plays a role in nucleocapsid assembly and is essential for viral replication. Distributed over the cylindrical capsid sheath of nucleocapsid.</text>
</comment>
<comment type="subunit">
    <text evidence="2">Interacts with VP1054, VP39 and VP80.</text>
</comment>
<comment type="subcellular location">
    <subcellularLocation>
        <location evidence="2">Virion</location>
    </subcellularLocation>
    <subcellularLocation>
        <location evidence="1">Host nucleus</location>
    </subcellularLocation>
    <subcellularLocation>
        <location evidence="1">Host cytoplasm</location>
    </subcellularLocation>
</comment>
<name>38K_NPVAC</name>
<evidence type="ECO:0000269" key="1">
    <source>
    </source>
</evidence>
<evidence type="ECO:0000269" key="2">
    <source>
    </source>
</evidence>
<protein>
    <recommendedName>
        <fullName>Uncharacterized 38.0 kDa protein in P143-LEF5 intergenic region</fullName>
    </recommendedName>
    <alternativeName>
        <fullName>ORF2</fullName>
    </alternativeName>
</protein>
<keyword id="KW-0002">3D-structure</keyword>
<keyword id="KW-1035">Host cytoplasm</keyword>
<keyword id="KW-1048">Host nucleus</keyword>
<keyword id="KW-1185">Reference proteome</keyword>
<keyword id="KW-0946">Virion</keyword>
<accession>P24745</accession>
<reference key="1">
    <citation type="journal article" date="1994" name="Virology">
        <title>The complete DNA sequence of Autographa californica nuclear polyhedrosis virus.</title>
        <authorList>
            <person name="Ayres M.D."/>
            <person name="Howard S.C."/>
            <person name="Kuzio J."/>
            <person name="Lopez-Ferber M."/>
            <person name="Possee R.D."/>
        </authorList>
    </citation>
    <scope>NUCLEOTIDE SEQUENCE [LARGE SCALE GENOMIC DNA]</scope>
    <source>
        <strain>C6</strain>
    </source>
</reference>
<reference key="2">
    <citation type="journal article" date="1991" name="Virology">
        <title>Nucleotide sequence of a gene essential for viral DNA replication in the baculovirus Autographa californica nuclear polyhedrosis virus.</title>
        <authorList>
            <person name="Lu A."/>
            <person name="Carstens E.B."/>
        </authorList>
    </citation>
    <scope>NUCLEOTIDE SEQUENCE [GENOMIC DNA]</scope>
    <source>
        <strain>HR3</strain>
    </source>
</reference>
<reference key="3">
    <citation type="journal article" date="2006" name="J. Virol.">
        <title>Autographa californica multiple nucleopolyhedrovirus nucleocapsid assembly is interrupted upon deletion of the 38K gene.</title>
        <authorList>
            <person name="Wu W."/>
            <person name="Lin T."/>
            <person name="Pan L."/>
            <person name="Yu M."/>
            <person name="Li Z."/>
            <person name="Pang Y."/>
            <person name="Yang K."/>
        </authorList>
    </citation>
    <scope>FUNCTION</scope>
    <scope>SUBCELLULAR LOCATION</scope>
</reference>
<reference key="4">
    <citation type="journal article" date="2008" name="J. Virol.">
        <title>Autographa californica multiple nucleopolyhedrovirus 38K is a novel nucleocapsid protein that interacts with VP1054, VP39, VP80, and itself.</title>
        <authorList>
            <person name="Wu W."/>
            <person name="Liang H."/>
            <person name="Kan J."/>
            <person name="Liu C."/>
            <person name="Yuan M."/>
            <person name="Liang C."/>
            <person name="Yang K."/>
            <person name="Pang Y."/>
        </authorList>
    </citation>
    <scope>FUNCTION</scope>
    <scope>SUBCELLULAR LOCATION</scope>
    <scope>INTERACTION WITH PROTEINS VP1054; VP39 AND VP80</scope>
</reference>
<sequence length="320" mass="38022">MASSLQSKWICLRLNDAIIKRHVLVLSEYADLKYLGFEKYKFFEYVIFQFCNDPQLCKIIENNYNYCMQIFKAPADDMRDIRHNIKRAFKTPVLGHMCVLSNKPPMYSFLKEWFLLPHYKVVSLKSESLTWGFPHVVVFDLDSTLITEEEQVEIRDPFVYDSLQELHEMGCVLVLWSYGSRDHVAHSMRDVDLEGYFDIIISEGSTVQEERSDLVQNSHNAIVDYNLKKRFIENKFVFDIHNHRSDNNIPKSPKIVIKYLSDKNVNFFKSITLVDDLPTNNYAYDFYVKVKRCPTPVQDWEHYHNEIIQNIMDYEQYFIK</sequence>